<sequence>MARREEETKEFEERVVTINRVAKVVKGGRRFRFTALVVVGDKNGRVGFGTGKAQEVPEAIKKAVEAAKKDLVVVPRVEGTTPHTITGRYGSGSVFMKPAAPGTGVIAGGPVRAVLELAGITDILSKSLGSNTPINMVRATIDGLQNLKNAEDVAKLRGKTVEELYN</sequence>
<comment type="function">
    <text evidence="1">With S4 and S12 plays an important role in translational accuracy.</text>
</comment>
<comment type="function">
    <text evidence="1">Located at the back of the 30S subunit body where it stabilizes the conformation of the head with respect to the body.</text>
</comment>
<comment type="subunit">
    <text evidence="1">Part of the 30S ribosomal subunit. Contacts proteins S4 and S8.</text>
</comment>
<comment type="domain">
    <text>The N-terminal domain interacts with the head of the 30S subunit; the C-terminal domain interacts with the body and contacts protein S4. The interaction surface between S4 and S5 is involved in control of translational fidelity.</text>
</comment>
<comment type="similarity">
    <text evidence="1">Belongs to the universal ribosomal protein uS5 family.</text>
</comment>
<organism>
    <name type="scientific">Staphylococcus aureus (strain USA300)</name>
    <dbReference type="NCBI Taxonomy" id="367830"/>
    <lineage>
        <taxon>Bacteria</taxon>
        <taxon>Bacillati</taxon>
        <taxon>Bacillota</taxon>
        <taxon>Bacilli</taxon>
        <taxon>Bacillales</taxon>
        <taxon>Staphylococcaceae</taxon>
        <taxon>Staphylococcus</taxon>
    </lineage>
</organism>
<proteinExistence type="inferred from homology"/>
<protein>
    <recommendedName>
        <fullName evidence="1">Small ribosomal subunit protein uS5</fullName>
    </recommendedName>
    <alternativeName>
        <fullName evidence="2">30S ribosomal protein S5</fullName>
    </alternativeName>
</protein>
<accession>Q2FEQ6</accession>
<keyword id="KW-0687">Ribonucleoprotein</keyword>
<keyword id="KW-0689">Ribosomal protein</keyword>
<keyword id="KW-0694">RNA-binding</keyword>
<keyword id="KW-0699">rRNA-binding</keyword>
<gene>
    <name evidence="1" type="primary">rpsE</name>
    <name type="ordered locus">SAUSA300_2187</name>
</gene>
<dbReference type="EMBL" id="CP000255">
    <property type="protein sequence ID" value="ABD20396.1"/>
    <property type="molecule type" value="Genomic_DNA"/>
</dbReference>
<dbReference type="RefSeq" id="WP_000113851.1">
    <property type="nucleotide sequence ID" value="NZ_CP027476.1"/>
</dbReference>
<dbReference type="SMR" id="Q2FEQ6"/>
<dbReference type="KEGG" id="saa:SAUSA300_2187"/>
<dbReference type="HOGENOM" id="CLU_065898_2_2_9"/>
<dbReference type="OMA" id="GIKDVWT"/>
<dbReference type="Proteomes" id="UP000001939">
    <property type="component" value="Chromosome"/>
</dbReference>
<dbReference type="GO" id="GO:0015935">
    <property type="term" value="C:small ribosomal subunit"/>
    <property type="evidence" value="ECO:0007669"/>
    <property type="project" value="InterPro"/>
</dbReference>
<dbReference type="GO" id="GO:0019843">
    <property type="term" value="F:rRNA binding"/>
    <property type="evidence" value="ECO:0007669"/>
    <property type="project" value="UniProtKB-UniRule"/>
</dbReference>
<dbReference type="GO" id="GO:0003735">
    <property type="term" value="F:structural constituent of ribosome"/>
    <property type="evidence" value="ECO:0007669"/>
    <property type="project" value="InterPro"/>
</dbReference>
<dbReference type="GO" id="GO:0006412">
    <property type="term" value="P:translation"/>
    <property type="evidence" value="ECO:0007669"/>
    <property type="project" value="UniProtKB-UniRule"/>
</dbReference>
<dbReference type="FunFam" id="3.30.160.20:FF:000001">
    <property type="entry name" value="30S ribosomal protein S5"/>
    <property type="match status" value="1"/>
</dbReference>
<dbReference type="FunFam" id="3.30.230.10:FF:000002">
    <property type="entry name" value="30S ribosomal protein S5"/>
    <property type="match status" value="1"/>
</dbReference>
<dbReference type="Gene3D" id="3.30.160.20">
    <property type="match status" value="1"/>
</dbReference>
<dbReference type="Gene3D" id="3.30.230.10">
    <property type="match status" value="1"/>
</dbReference>
<dbReference type="HAMAP" id="MF_01307_B">
    <property type="entry name" value="Ribosomal_uS5_B"/>
    <property type="match status" value="1"/>
</dbReference>
<dbReference type="InterPro" id="IPR020568">
    <property type="entry name" value="Ribosomal_Su5_D2-typ_SF"/>
</dbReference>
<dbReference type="InterPro" id="IPR000851">
    <property type="entry name" value="Ribosomal_uS5"/>
</dbReference>
<dbReference type="InterPro" id="IPR005712">
    <property type="entry name" value="Ribosomal_uS5_bac-type"/>
</dbReference>
<dbReference type="InterPro" id="IPR005324">
    <property type="entry name" value="Ribosomal_uS5_C"/>
</dbReference>
<dbReference type="InterPro" id="IPR013810">
    <property type="entry name" value="Ribosomal_uS5_N"/>
</dbReference>
<dbReference type="InterPro" id="IPR018192">
    <property type="entry name" value="Ribosomal_uS5_N_CS"/>
</dbReference>
<dbReference type="InterPro" id="IPR014721">
    <property type="entry name" value="Ribsml_uS5_D2-typ_fold_subgr"/>
</dbReference>
<dbReference type="NCBIfam" id="TIGR01021">
    <property type="entry name" value="rpsE_bact"/>
    <property type="match status" value="1"/>
</dbReference>
<dbReference type="PANTHER" id="PTHR48277">
    <property type="entry name" value="MITOCHONDRIAL RIBOSOMAL PROTEIN S5"/>
    <property type="match status" value="1"/>
</dbReference>
<dbReference type="PANTHER" id="PTHR48277:SF1">
    <property type="entry name" value="MITOCHONDRIAL RIBOSOMAL PROTEIN S5"/>
    <property type="match status" value="1"/>
</dbReference>
<dbReference type="Pfam" id="PF00333">
    <property type="entry name" value="Ribosomal_S5"/>
    <property type="match status" value="1"/>
</dbReference>
<dbReference type="Pfam" id="PF03719">
    <property type="entry name" value="Ribosomal_S5_C"/>
    <property type="match status" value="1"/>
</dbReference>
<dbReference type="SUPFAM" id="SSF54768">
    <property type="entry name" value="dsRNA-binding domain-like"/>
    <property type="match status" value="1"/>
</dbReference>
<dbReference type="SUPFAM" id="SSF54211">
    <property type="entry name" value="Ribosomal protein S5 domain 2-like"/>
    <property type="match status" value="1"/>
</dbReference>
<dbReference type="PROSITE" id="PS00585">
    <property type="entry name" value="RIBOSOMAL_S5"/>
    <property type="match status" value="1"/>
</dbReference>
<dbReference type="PROSITE" id="PS50881">
    <property type="entry name" value="S5_DSRBD"/>
    <property type="match status" value="1"/>
</dbReference>
<evidence type="ECO:0000255" key="1">
    <source>
        <dbReference type="HAMAP-Rule" id="MF_01307"/>
    </source>
</evidence>
<evidence type="ECO:0000305" key="2"/>
<reference key="1">
    <citation type="journal article" date="2006" name="Lancet">
        <title>Complete genome sequence of USA300, an epidemic clone of community-acquired meticillin-resistant Staphylococcus aureus.</title>
        <authorList>
            <person name="Diep B.A."/>
            <person name="Gill S.R."/>
            <person name="Chang R.F."/>
            <person name="Phan T.H."/>
            <person name="Chen J.H."/>
            <person name="Davidson M.G."/>
            <person name="Lin F."/>
            <person name="Lin J."/>
            <person name="Carleton H.A."/>
            <person name="Mongodin E.F."/>
            <person name="Sensabaugh G.F."/>
            <person name="Perdreau-Remington F."/>
        </authorList>
    </citation>
    <scope>NUCLEOTIDE SEQUENCE [LARGE SCALE GENOMIC DNA]</scope>
    <source>
        <strain>USA300</strain>
    </source>
</reference>
<name>RS5_STAA3</name>
<feature type="chain" id="PRO_1000086062" description="Small ribosomal subunit protein uS5">
    <location>
        <begin position="1"/>
        <end position="166"/>
    </location>
</feature>
<feature type="domain" description="S5 DRBM" evidence="1">
    <location>
        <begin position="11"/>
        <end position="74"/>
    </location>
</feature>